<organism>
    <name type="scientific">Chlamydia trachomatis serovar D (strain ATCC VR-885 / DSM 19411 / UW-3/Cx)</name>
    <dbReference type="NCBI Taxonomy" id="272561"/>
    <lineage>
        <taxon>Bacteria</taxon>
        <taxon>Pseudomonadati</taxon>
        <taxon>Chlamydiota</taxon>
        <taxon>Chlamydiia</taxon>
        <taxon>Chlamydiales</taxon>
        <taxon>Chlamydiaceae</taxon>
        <taxon>Chlamydia/Chlamydophila group</taxon>
        <taxon>Chlamydia</taxon>
    </lineage>
</organism>
<name>PMPF_CHLTR</name>
<protein>
    <recommendedName>
        <fullName>Probable outer membrane protein PmpF</fullName>
    </recommendedName>
    <alternativeName>
        <fullName>Polymorphic membrane protein F</fullName>
    </alternativeName>
</protein>
<evidence type="ECO:0000255" key="1">
    <source>
        <dbReference type="PROSITE-ProRule" id="PRU00556"/>
    </source>
</evidence>
<evidence type="ECO:0000256" key="2">
    <source>
        <dbReference type="SAM" id="MobiDB-lite"/>
    </source>
</evidence>
<evidence type="ECO:0000269" key="3">
    <source ref="2"/>
</evidence>
<evidence type="ECO:0000305" key="4"/>
<keyword id="KW-0998">Cell outer membrane</keyword>
<keyword id="KW-0134">Cell wall</keyword>
<keyword id="KW-0903">Direct protein sequencing</keyword>
<keyword id="KW-0472">Membrane</keyword>
<keyword id="KW-1185">Reference proteome</keyword>
<keyword id="KW-0964">Secreted</keyword>
<keyword id="KW-0732">Signal</keyword>
<keyword id="KW-0812">Transmembrane</keyword>
<keyword id="KW-1134">Transmembrane beta strand</keyword>
<proteinExistence type="evidence at protein level"/>
<sequence length="1034" mass="112393">MIKRTSLSFACLSFFYLSTISILQANETDTLQFRRFTFSDREIQFVLDPASLITAQNIVLSNLQSNGTGACTISGNTQTQIFSNSVNTTADSGGAFDMVTTSFTASDNANLLFCNNYCTHNKGGGAIRSGGPIRFLNNQDVLFYNNISAGAKYVGTGDHNEKNRGGALYATTITLTGNRTLAFINNMSGDCGGAISADTQISITDTVKGILFENNHTLNHIPYTQAENMARGGAICSRRDLCSISNNSGPIVFNYNQGGKGGAISATRCVIDNNKERIIFSNNSSLGWSQSSSASNGGAIQTTQGFTLRNNKGSIYFDSNTATHAGGAINCGYIDIRDNGPVYFLNNSAAWGAAFNLSKPRSATNYIHTGTGDIVFNNNVVFTLDGNLLGKRKLFHINNNEITPYTLSLGAKKDTRIYFYDLFQWERVKENTSNNPPSPTSRNTITVNPETEFSGAVVFSYNQMSSDIRTLMGKEHNYIKEAPTTLKFGTLAIEDDAELEIFNIPFTQNPTSLLALGSGATLTVGKHGKLNITNLGVILPIILKEGKSPPCIRVNPQDMTQNTGTGQTPSSTSSISTPMIIFNGRLSIVDENYESVYDSMDLSRGKAEQLILSIETTNDGQLDSNWQSSLNTSLLSPPHYGYQGLWTPNWITTTYTITLNNNSSAPTSATSIAEQKKTSETFTPSNTTTASIPNIKASAGSGSGSASNSGEVTITKHTLVVNWAPVGYIVDPIRRGDLIANSLVHSGRNMTMGLRSLLPDNSWFALQGAATTLFTKQQKRLSYHGYSSASKGYTVSSQASGAHGHKFLLSFSQSSDKMKEKETNNRLSSRYYLSALCFEHPMFDRIALIGAAACNYGTHNMRSFYGTKKSSKGKFHSTTLGASLRCELRDSMPLRSIMLTPFAQALFSRTEPASIRESGDLARLFTLEQAHTAVVSPIGIKGAYSSDTWPTLSWEMELAYQPTLYWKRPLLNTLLIQNNGSWVTTNTPLAKHSFYGRGSHSLKFSHLKLFANYQAEVATSTVSHYINAGGALVF</sequence>
<comment type="subcellular location">
    <subcellularLocation>
        <location>Secreted</location>
        <location>Cell wall</location>
    </subcellularLocation>
    <subcellularLocation>
        <location>Cell outer membrane</location>
        <topology>Peripheral membrane protein</topology>
        <orientation>Extracellular side</orientation>
    </subcellularLocation>
</comment>
<comment type="developmental stage">
    <text>Elementary body.</text>
</comment>
<comment type="similarity">
    <text evidence="4">Belongs to the PMP outer membrane protein family.</text>
</comment>
<dbReference type="EMBL" id="AE001273">
    <property type="protein sequence ID" value="AAC68468.1"/>
    <property type="molecule type" value="Genomic_DNA"/>
</dbReference>
<dbReference type="PIR" id="F71460">
    <property type="entry name" value="F71460"/>
</dbReference>
<dbReference type="RefSeq" id="NP_220392.1">
    <property type="nucleotide sequence ID" value="NC_000117.1"/>
</dbReference>
<dbReference type="RefSeq" id="WP_009872989.1">
    <property type="nucleotide sequence ID" value="NC_000117.1"/>
</dbReference>
<dbReference type="STRING" id="272561.CT_870"/>
<dbReference type="TCDB" id="1.B.12.1.10">
    <property type="family name" value="the autotransporter-1 (at-1) family"/>
</dbReference>
<dbReference type="EnsemblBacteria" id="AAC68468">
    <property type="protein sequence ID" value="AAC68468"/>
    <property type="gene ID" value="CT_870"/>
</dbReference>
<dbReference type="GeneID" id="884672"/>
<dbReference type="KEGG" id="ctr:CT_870"/>
<dbReference type="PATRIC" id="fig|272561.5.peg.961"/>
<dbReference type="HOGENOM" id="CLU_004549_2_0_0"/>
<dbReference type="InParanoid" id="P38008"/>
<dbReference type="OrthoDB" id="16673at2"/>
<dbReference type="Proteomes" id="UP000000431">
    <property type="component" value="Chromosome"/>
</dbReference>
<dbReference type="GO" id="GO:0009279">
    <property type="term" value="C:cell outer membrane"/>
    <property type="evidence" value="ECO:0007669"/>
    <property type="project" value="UniProtKB-SubCell"/>
</dbReference>
<dbReference type="GO" id="GO:0005576">
    <property type="term" value="C:extracellular region"/>
    <property type="evidence" value="ECO:0007669"/>
    <property type="project" value="UniProtKB-KW"/>
</dbReference>
<dbReference type="Gene3D" id="2.40.128.130">
    <property type="entry name" value="Autotransporter beta-domain"/>
    <property type="match status" value="1"/>
</dbReference>
<dbReference type="InterPro" id="IPR005546">
    <property type="entry name" value="Autotransporte_beta"/>
</dbReference>
<dbReference type="InterPro" id="IPR036709">
    <property type="entry name" value="Autotransporte_beta_dom_sf"/>
</dbReference>
<dbReference type="InterPro" id="IPR011427">
    <property type="entry name" value="Polymorphic_membr_middle"/>
</dbReference>
<dbReference type="InterPro" id="IPR003368">
    <property type="entry name" value="POMP_repeat"/>
</dbReference>
<dbReference type="NCBIfam" id="TIGR01376">
    <property type="entry name" value="POMP_repeat"/>
    <property type="match status" value="3"/>
</dbReference>
<dbReference type="Pfam" id="PF03797">
    <property type="entry name" value="Autotransporter"/>
    <property type="match status" value="1"/>
</dbReference>
<dbReference type="Pfam" id="PF02415">
    <property type="entry name" value="Chlam_PMP"/>
    <property type="match status" value="2"/>
</dbReference>
<dbReference type="Pfam" id="PF07548">
    <property type="entry name" value="ChlamPMP_M"/>
    <property type="match status" value="1"/>
</dbReference>
<dbReference type="SMART" id="SM00869">
    <property type="entry name" value="Autotransporter"/>
    <property type="match status" value="1"/>
</dbReference>
<dbReference type="SUPFAM" id="SSF103515">
    <property type="entry name" value="Autotransporter"/>
    <property type="match status" value="1"/>
</dbReference>
<dbReference type="PROSITE" id="PS51208">
    <property type="entry name" value="AUTOTRANSPORTER"/>
    <property type="match status" value="1"/>
</dbReference>
<reference key="1">
    <citation type="journal article" date="1998" name="Science">
        <title>Genome sequence of an obligate intracellular pathogen of humans: Chlamydia trachomatis.</title>
        <authorList>
            <person name="Stephens R.S."/>
            <person name="Kalman S."/>
            <person name="Lammel C.J."/>
            <person name="Fan J."/>
            <person name="Marathe R."/>
            <person name="Aravind L."/>
            <person name="Mitchell W.P."/>
            <person name="Olinger L."/>
            <person name="Tatusov R.L."/>
            <person name="Zhao Q."/>
            <person name="Koonin E.V."/>
            <person name="Davis R.W."/>
        </authorList>
    </citation>
    <scope>NUCLEOTIDE SEQUENCE [LARGE SCALE GENOMIC DNA]</scope>
    <source>
        <strain>ATCC VR-885 / DSM 19411 / UW-3/Cx</strain>
    </source>
</reference>
<reference key="2">
    <citation type="submission" date="1994-09" db="UniProtKB">
        <authorList>
            <person name="Bini L."/>
            <person name="Santucci A."/>
            <person name="Magi B."/>
            <person name="Marzocchi B."/>
            <person name="Sanchez-Campillo M."/>
            <person name="Comanducci M."/>
            <person name="Christianen G."/>
            <person name="Birkelund S."/>
            <person name="Vtretou E."/>
            <person name="Ratti G."/>
            <person name="Pallini V."/>
        </authorList>
    </citation>
    <scope>PROTEIN SEQUENCE OF 26-35</scope>
    <source>
        <strain>L2/434/Bu</strain>
    </source>
</reference>
<feature type="signal peptide" evidence="3">
    <location>
        <begin position="1"/>
        <end position="25"/>
    </location>
</feature>
<feature type="chain" id="PRO_0000024727" description="Probable outer membrane protein PmpF">
    <location>
        <begin position="26"/>
        <end position="1034"/>
    </location>
</feature>
<feature type="domain" description="Autotransporter" evidence="1">
    <location>
        <begin position="755"/>
        <end position="1034"/>
    </location>
</feature>
<feature type="region of interest" description="Disordered" evidence="2">
    <location>
        <begin position="664"/>
        <end position="709"/>
    </location>
</feature>
<feature type="compositionally biased region" description="Low complexity" evidence="2">
    <location>
        <begin position="664"/>
        <end position="673"/>
    </location>
</feature>
<feature type="compositionally biased region" description="Low complexity" evidence="2">
    <location>
        <begin position="680"/>
        <end position="709"/>
    </location>
</feature>
<feature type="sequence conflict" description="In Ref. 2; AA sequence." evidence="4" ref="2">
    <original>RR</original>
    <variation>FH</variation>
    <location>
        <begin position="34"/>
        <end position="35"/>
    </location>
</feature>
<gene>
    <name type="primary">pmpF</name>
    <name type="ordered locus">CT_870</name>
</gene>
<accession>P38008</accession>
<accession>O84878</accession>